<organismHost>
    <name type="scientific">Ornithodoros</name>
    <name type="common">relapsing fever ticks</name>
    <dbReference type="NCBI Taxonomy" id="6937"/>
</organismHost>
<organismHost>
    <name type="scientific">Phacochoerus aethiopicus</name>
    <name type="common">Warthog</name>
    <dbReference type="NCBI Taxonomy" id="85517"/>
</organismHost>
<organismHost>
    <name type="scientific">Phacochoerus africanus</name>
    <name type="common">Warthog</name>
    <dbReference type="NCBI Taxonomy" id="41426"/>
</organismHost>
<organismHost>
    <name type="scientific">Potamochoerus larvatus</name>
    <name type="common">Bushpig</name>
    <dbReference type="NCBI Taxonomy" id="273792"/>
</organismHost>
<organismHost>
    <name type="scientific">Sus scrofa</name>
    <name type="common">Pig</name>
    <dbReference type="NCBI Taxonomy" id="9823"/>
</organismHost>
<feature type="chain" id="PRO_0000373642" description="Initiation factor TFIIB homolog">
    <location>
        <begin position="1"/>
        <end position="315"/>
    </location>
</feature>
<dbReference type="EMBL" id="AY261363">
    <property type="status" value="NOT_ANNOTATED_CDS"/>
    <property type="molecule type" value="Genomic_DNA"/>
</dbReference>
<dbReference type="Proteomes" id="UP000000859">
    <property type="component" value="Segment"/>
</dbReference>
<accession>P0CAD7</accession>
<comment type="function">
    <text evidence="1">Putative initation factor.</text>
</comment>
<comment type="similarity">
    <text evidence="2">Belongs to the asfivirus C315R family.</text>
</comment>
<evidence type="ECO:0000250" key="1">
    <source>
        <dbReference type="UniProtKB" id="Q65160"/>
    </source>
</evidence>
<evidence type="ECO:0000305" key="2"/>
<sequence length="315" mass="36807">MDALLKEIEKLSQPSLQKENNDVCDLCFMQMKKISNYQLLCEECGQLKDWFEPEYNEKFTVYSRLKIVGANSSYHQRDLDKANSSDYSSLQFHHILEELKSLNVKYMDAGQKPFPIQVLKETAHSYNQVQQHRVIRSITKLQILASILRSICLKLNIACTVADAARFTQLNTKGISRGMDLLRSLFVDNKITLNVDLNPIDSFINSTYNALQIKQIHQELQEENVYNLKEIVKSFILYADEKNIGVDLNRRTVVIATMYNVLRRAYYPIEIDTVVYQCKIRKNTITRALKMYEDYYSHFKSLYEQYHLNAAKKLI</sequence>
<reference key="1">
    <citation type="submission" date="2003-03" db="EMBL/GenBank/DDBJ databases">
        <title>African swine fever virus genomes.</title>
        <authorList>
            <person name="Kutish G.F."/>
            <person name="Rock D.L."/>
        </authorList>
    </citation>
    <scope>NUCLEOTIDE SEQUENCE [LARGE SCALE GENOMIC DNA]</scope>
</reference>
<protein>
    <recommendedName>
        <fullName evidence="1">Initiation factor TFIIB homolog</fullName>
        <shortName>pC315R</shortName>
    </recommendedName>
</protein>
<name>TFIIB_ASFP4</name>
<organism>
    <name type="scientific">African swine fever virus (isolate Tick/South Africa/Pretoriuskop Pr4/1996)</name>
    <name type="common">ASFV</name>
    <dbReference type="NCBI Taxonomy" id="561443"/>
    <lineage>
        <taxon>Viruses</taxon>
        <taxon>Varidnaviria</taxon>
        <taxon>Bamfordvirae</taxon>
        <taxon>Nucleocytoviricota</taxon>
        <taxon>Pokkesviricetes</taxon>
        <taxon>Asfuvirales</taxon>
        <taxon>Asfarviridae</taxon>
        <taxon>Asfivirus</taxon>
        <taxon>African swine fever virus</taxon>
    </lineage>
</organism>
<proteinExistence type="inferred from homology"/>
<gene>
    <name type="ordered locus">Pret-080</name>
</gene>